<accession>Q2SPF8</accession>
<organism>
    <name type="scientific">Hahella chejuensis (strain KCTC 2396)</name>
    <dbReference type="NCBI Taxonomy" id="349521"/>
    <lineage>
        <taxon>Bacteria</taxon>
        <taxon>Pseudomonadati</taxon>
        <taxon>Pseudomonadota</taxon>
        <taxon>Gammaproteobacteria</taxon>
        <taxon>Oceanospirillales</taxon>
        <taxon>Hahellaceae</taxon>
        <taxon>Hahella</taxon>
    </lineage>
</organism>
<comment type="function">
    <text evidence="1">Redox regulated molecular chaperone. Protects both thermally unfolding and oxidatively damaged proteins from irreversible aggregation. Plays an important role in the bacterial defense system toward oxidative stress.</text>
</comment>
<comment type="subcellular location">
    <subcellularLocation>
        <location evidence="1">Cytoplasm</location>
    </subcellularLocation>
</comment>
<comment type="PTM">
    <text evidence="1">Under oxidizing conditions two disulfide bonds are formed involving the reactive cysteines. Under reducing conditions zinc is bound to the reactive cysteines and the protein is inactive.</text>
</comment>
<comment type="similarity">
    <text evidence="1">Belongs to the HSP33 family.</text>
</comment>
<keyword id="KW-0143">Chaperone</keyword>
<keyword id="KW-0963">Cytoplasm</keyword>
<keyword id="KW-1015">Disulfide bond</keyword>
<keyword id="KW-0676">Redox-active center</keyword>
<keyword id="KW-1185">Reference proteome</keyword>
<keyword id="KW-0862">Zinc</keyword>
<reference key="1">
    <citation type="journal article" date="2005" name="Nucleic Acids Res.">
        <title>Genomic blueprint of Hahella chejuensis, a marine microbe producing an algicidal agent.</title>
        <authorList>
            <person name="Jeong H."/>
            <person name="Yim J.H."/>
            <person name="Lee C."/>
            <person name="Choi S.-H."/>
            <person name="Park Y.K."/>
            <person name="Yoon S.H."/>
            <person name="Hur C.-G."/>
            <person name="Kang H.-Y."/>
            <person name="Kim D."/>
            <person name="Lee H.H."/>
            <person name="Park K.H."/>
            <person name="Park S.-H."/>
            <person name="Park H.-S."/>
            <person name="Lee H.K."/>
            <person name="Oh T.K."/>
            <person name="Kim J.F."/>
        </authorList>
    </citation>
    <scope>NUCLEOTIDE SEQUENCE [LARGE SCALE GENOMIC DNA]</scope>
    <source>
        <strain>KCTC 2396</strain>
    </source>
</reference>
<evidence type="ECO:0000255" key="1">
    <source>
        <dbReference type="HAMAP-Rule" id="MF_00117"/>
    </source>
</evidence>
<gene>
    <name evidence="1" type="primary">hslO</name>
    <name type="ordered locus">HCH_00562</name>
</gene>
<protein>
    <recommendedName>
        <fullName evidence="1">33 kDa chaperonin</fullName>
    </recommendedName>
    <alternativeName>
        <fullName evidence="1">Heat shock protein 33 homolog</fullName>
        <shortName evidence="1">HSP33</shortName>
    </alternativeName>
</protein>
<sequence length="285" mass="31920">MKADLLQRFIFDELDIRGELLVLKKTVQDALSRHDYPQAIQSLLGQALSAGLLLSATLKIKGDTTLQATGEGELRLLMAEATHRRTARGIARWEGAPDSTSLKQLLGNRAALAITIAPQNGQRYQGIVPLSSDSLSACLEEYFERSEQLATRIWLYESNGCWGGLLLQQLPAARGGEYSAENWERIVALSATLTADELFSLPAEEVLHRLFHEESVRVLQEEPASFWCSCSEERTLEVVKSLGREEAFSILDESGEIEMNCQFCLQRYSFGRERIEQLFDSPTLH</sequence>
<proteinExistence type="inferred from homology"/>
<feature type="chain" id="PRO_0000238071" description="33 kDa chaperonin">
    <location>
        <begin position="1"/>
        <end position="285"/>
    </location>
</feature>
<feature type="disulfide bond" description="Redox-active" evidence="1">
    <location>
        <begin position="228"/>
        <end position="230"/>
    </location>
</feature>
<feature type="disulfide bond" description="Redox-active" evidence="1">
    <location>
        <begin position="261"/>
        <end position="264"/>
    </location>
</feature>
<name>HSLO_HAHCH</name>
<dbReference type="EMBL" id="CP000155">
    <property type="protein sequence ID" value="ABC27466.1"/>
    <property type="molecule type" value="Genomic_DNA"/>
</dbReference>
<dbReference type="RefSeq" id="WP_011394543.1">
    <property type="nucleotide sequence ID" value="NC_007645.1"/>
</dbReference>
<dbReference type="SMR" id="Q2SPF8"/>
<dbReference type="STRING" id="349521.HCH_00562"/>
<dbReference type="KEGG" id="hch:HCH_00562"/>
<dbReference type="eggNOG" id="COG1281">
    <property type="taxonomic scope" value="Bacteria"/>
</dbReference>
<dbReference type="HOGENOM" id="CLU_054493_0_0_6"/>
<dbReference type="OrthoDB" id="9793753at2"/>
<dbReference type="Proteomes" id="UP000000238">
    <property type="component" value="Chromosome"/>
</dbReference>
<dbReference type="GO" id="GO:0005737">
    <property type="term" value="C:cytoplasm"/>
    <property type="evidence" value="ECO:0007669"/>
    <property type="project" value="UniProtKB-SubCell"/>
</dbReference>
<dbReference type="GO" id="GO:0044183">
    <property type="term" value="F:protein folding chaperone"/>
    <property type="evidence" value="ECO:0007669"/>
    <property type="project" value="TreeGrafter"/>
</dbReference>
<dbReference type="GO" id="GO:0051082">
    <property type="term" value="F:unfolded protein binding"/>
    <property type="evidence" value="ECO:0007669"/>
    <property type="project" value="UniProtKB-UniRule"/>
</dbReference>
<dbReference type="GO" id="GO:0042026">
    <property type="term" value="P:protein refolding"/>
    <property type="evidence" value="ECO:0007669"/>
    <property type="project" value="TreeGrafter"/>
</dbReference>
<dbReference type="CDD" id="cd00498">
    <property type="entry name" value="Hsp33"/>
    <property type="match status" value="1"/>
</dbReference>
<dbReference type="Gene3D" id="1.10.287.480">
    <property type="entry name" value="helix hairpin bin"/>
    <property type="match status" value="1"/>
</dbReference>
<dbReference type="Gene3D" id="3.55.30.10">
    <property type="entry name" value="Hsp33 domain"/>
    <property type="match status" value="1"/>
</dbReference>
<dbReference type="Gene3D" id="3.90.1280.10">
    <property type="entry name" value="HSP33 redox switch-like"/>
    <property type="match status" value="1"/>
</dbReference>
<dbReference type="HAMAP" id="MF_00117">
    <property type="entry name" value="HslO"/>
    <property type="match status" value="1"/>
</dbReference>
<dbReference type="InterPro" id="IPR000397">
    <property type="entry name" value="Heat_shock_Hsp33"/>
</dbReference>
<dbReference type="InterPro" id="IPR016154">
    <property type="entry name" value="Heat_shock_Hsp33_C"/>
</dbReference>
<dbReference type="InterPro" id="IPR016153">
    <property type="entry name" value="Heat_shock_Hsp33_N"/>
</dbReference>
<dbReference type="InterPro" id="IPR023212">
    <property type="entry name" value="Hsp33_helix_hairpin_bin_dom_sf"/>
</dbReference>
<dbReference type="NCBIfam" id="NF001033">
    <property type="entry name" value="PRK00114.1"/>
    <property type="match status" value="1"/>
</dbReference>
<dbReference type="PANTHER" id="PTHR30111">
    <property type="entry name" value="33 KDA CHAPERONIN"/>
    <property type="match status" value="1"/>
</dbReference>
<dbReference type="PANTHER" id="PTHR30111:SF1">
    <property type="entry name" value="33 KDA CHAPERONIN"/>
    <property type="match status" value="1"/>
</dbReference>
<dbReference type="Pfam" id="PF01430">
    <property type="entry name" value="HSP33"/>
    <property type="match status" value="1"/>
</dbReference>
<dbReference type="PIRSF" id="PIRSF005261">
    <property type="entry name" value="Heat_shock_Hsp33"/>
    <property type="match status" value="1"/>
</dbReference>
<dbReference type="SUPFAM" id="SSF64397">
    <property type="entry name" value="Hsp33 domain"/>
    <property type="match status" value="1"/>
</dbReference>
<dbReference type="SUPFAM" id="SSF118352">
    <property type="entry name" value="HSP33 redox switch-like"/>
    <property type="match status" value="1"/>
</dbReference>